<organism>
    <name type="scientific">Vitis pseudoreticulata</name>
    <name type="common">Chinese wild grapevine</name>
    <dbReference type="NCBI Taxonomy" id="231512"/>
    <lineage>
        <taxon>Eukaryota</taxon>
        <taxon>Viridiplantae</taxon>
        <taxon>Streptophyta</taxon>
        <taxon>Embryophyta</taxon>
        <taxon>Tracheophyta</taxon>
        <taxon>Spermatophyta</taxon>
        <taxon>Magnoliopsida</taxon>
        <taxon>eudicotyledons</taxon>
        <taxon>Gunneridae</taxon>
        <taxon>Pentapetalae</taxon>
        <taxon>rosids</taxon>
        <taxon>Vitales</taxon>
        <taxon>Vitaceae</taxon>
        <taxon>Viteae</taxon>
        <taxon>Vitis</taxon>
    </lineage>
</organism>
<keyword id="KW-0134">Cell wall</keyword>
<keyword id="KW-0560">Oxidoreductase</keyword>
<keyword id="KW-0611">Plant defense</keyword>
<keyword id="KW-0964">Secreted</keyword>
<keyword id="KW-0732">Signal</keyword>
<feature type="signal peptide" evidence="2">
    <location>
        <begin position="1"/>
        <end position="19"/>
    </location>
</feature>
<feature type="chain" id="PRO_0000436454" description="Aldehyde oxidase GLOX">
    <location>
        <begin position="20"/>
        <end position="523"/>
    </location>
</feature>
<evidence type="ECO:0000250" key="1">
    <source>
        <dbReference type="UniProtKB" id="Q01772"/>
    </source>
</evidence>
<evidence type="ECO:0000255" key="2"/>
<evidence type="ECO:0000269" key="3">
    <source>
    </source>
</evidence>
<evidence type="ECO:0000269" key="4">
    <source>
    </source>
</evidence>
<evidence type="ECO:0000269" key="5">
    <source ref="1"/>
</evidence>
<evidence type="ECO:0000303" key="6">
    <source>
    </source>
</evidence>
<evidence type="ECO:0000303" key="7">
    <source>
    </source>
</evidence>
<evidence type="ECO:0000303" key="8">
    <source ref="1"/>
</evidence>
<evidence type="ECO:0000305" key="9"/>
<dbReference type="EC" id="1.2.3.1" evidence="9"/>
<dbReference type="EMBL" id="DQ201181">
    <property type="protein sequence ID" value="ABA42922.1"/>
    <property type="molecule type" value="mRNA"/>
</dbReference>
<dbReference type="SMR" id="Q3HRQ2"/>
<dbReference type="GO" id="GO:0005615">
    <property type="term" value="C:extracellular space"/>
    <property type="evidence" value="ECO:0000314"/>
    <property type="project" value="UniProtKB"/>
</dbReference>
<dbReference type="GO" id="GO:0004031">
    <property type="term" value="F:aldehyde oxidase activity"/>
    <property type="evidence" value="ECO:0007669"/>
    <property type="project" value="UniProtKB-EC"/>
</dbReference>
<dbReference type="GO" id="GO:0050832">
    <property type="term" value="P:defense response to fungus"/>
    <property type="evidence" value="ECO:0000315"/>
    <property type="project" value="UniProtKB"/>
</dbReference>
<dbReference type="CDD" id="cd02851">
    <property type="entry name" value="E_set_GO_C"/>
    <property type="match status" value="1"/>
</dbReference>
<dbReference type="FunFam" id="2.130.10.80:FF:000001">
    <property type="entry name" value="Aldehyde oxidase GLOX"/>
    <property type="match status" value="1"/>
</dbReference>
<dbReference type="Gene3D" id="2.130.10.80">
    <property type="entry name" value="Galactose oxidase/kelch, beta-propeller"/>
    <property type="match status" value="1"/>
</dbReference>
<dbReference type="Gene3D" id="2.60.40.10">
    <property type="entry name" value="Immunoglobulins"/>
    <property type="match status" value="1"/>
</dbReference>
<dbReference type="InterPro" id="IPR011043">
    <property type="entry name" value="Gal_Oxase/kelch_b-propeller"/>
</dbReference>
<dbReference type="InterPro" id="IPR037293">
    <property type="entry name" value="Gal_Oxidase_central_sf"/>
</dbReference>
<dbReference type="InterPro" id="IPR009880">
    <property type="entry name" value="Glyoxal_oxidase_N"/>
</dbReference>
<dbReference type="InterPro" id="IPR015202">
    <property type="entry name" value="GO-like_E_set"/>
</dbReference>
<dbReference type="InterPro" id="IPR013783">
    <property type="entry name" value="Ig-like_fold"/>
</dbReference>
<dbReference type="InterPro" id="IPR014756">
    <property type="entry name" value="Ig_E-set"/>
</dbReference>
<dbReference type="PANTHER" id="PTHR32208:SF21">
    <property type="entry name" value="LOW QUALITY PROTEIN: ALDEHYDE OXIDASE GLOX-LIKE"/>
    <property type="match status" value="1"/>
</dbReference>
<dbReference type="PANTHER" id="PTHR32208">
    <property type="entry name" value="SECRETED PROTEIN-RELATED"/>
    <property type="match status" value="1"/>
</dbReference>
<dbReference type="Pfam" id="PF07250">
    <property type="entry name" value="Glyoxal_oxid_N"/>
    <property type="match status" value="1"/>
</dbReference>
<dbReference type="Pfam" id="PF09118">
    <property type="entry name" value="GO-like_E_set"/>
    <property type="match status" value="1"/>
</dbReference>
<dbReference type="SUPFAM" id="SSF81296">
    <property type="entry name" value="E set domains"/>
    <property type="match status" value="1"/>
</dbReference>
<dbReference type="SUPFAM" id="SSF50965">
    <property type="entry name" value="Galactose oxidase, central domain"/>
    <property type="match status" value="1"/>
</dbReference>
<name>GLOX_VITPS</name>
<sequence>MILDAAIVALADLPGTWELIVPNAGIASMHTAVTRYGTVVLLDRTNIGPSRKMLPKGHCRYDPKDEVLKRDCYAHSVILDLNTNKIRPLKILTDTWCSSGQFLPDGSLLQTGGDLDGVKKIRKFVPCGPHGFCDWEELKDVELETGRWYATNQILPDGSVIIVGGRAANSVEYYPPRKGGAVQLPFLSDVEDKQMDNLYPYVHLLPNGHLFIFANNKAVMYDYTSNKVMLEYPPLDGGPRNYPSAGSSVMLALEGDYSMAIIVVCGGAQFGAFIQKSTDTPAHGSCGRIVATSPHPVWEMEDMPFGRIMGDMVMLPTGDVLIINGAQAGSQGFELASSPCFFPLLYRPNQPLGLRFMTLTPGTVPRMYHSTANLLPDGRVLIAGSNPHYFYKFAAEFPTELRIEAFSPEYLFADKANIRPVIDESPEMVRFGEQFDVFVSVSLPVVGSMEVNLASAPFATHSFSQGQRLVKLTVSPTVPDADERYRIVCTAPPGGKIAPPGYYMMFAVNLGVPSVARWVQLVP</sequence>
<reference key="1">
    <citation type="journal article" date="2007" name="Biol. Plant.">
        <title>cDNA cloning, expression, protein purification, and characterization of a novel glyoxal oxidase related gene from Vitis pseudoreticulata.</title>
        <authorList>
            <person name="Zhou B.J."/>
            <person name="Wang X.P."/>
            <person name="Wang Y.J."/>
        </authorList>
    </citation>
    <scope>NUCLEOTIDE SEQUENCE [MRNA]</scope>
    <scope>INDUCTION BY THE GRAPEVINE POWDERY MILDEW</scope>
    <source>
        <tissue>Leaf</tissue>
    </source>
</reference>
<reference key="2">
    <citation type="journal article" date="2011" name="Protoplasma">
        <title>Transient expression of glyoxal oxidase from the Chinese wild grape Vitis pseudoreticulata can suppress powdery mildew in a susceptible genotype.</title>
        <authorList>
            <person name="Guan X."/>
            <person name="Zhao H."/>
            <person name="Xu Y."/>
            <person name="Wang Y."/>
        </authorList>
    </citation>
    <scope>FUNCTION</scope>
</reference>
<reference key="3">
    <citation type="journal article" date="2013" name="Protoplasma">
        <title>Characterization of novel gene expression related to glyoxal oxidase by agro-infiltration of the leaves of accession Baihe-35-1 of Vitis pseudoreticulata involved in production of H2O2 for resistance to Erysiphe necator.</title>
        <authorList>
            <person name="Zhao H."/>
            <person name="Guan X."/>
            <person name="Xu Y."/>
            <person name="Wang Y."/>
        </authorList>
    </citation>
    <scope>FUNCTION</scope>
    <scope>SUBCELLULAR LOCATION</scope>
</reference>
<protein>
    <recommendedName>
        <fullName evidence="9">Aldehyde oxidase GLOX</fullName>
        <ecNumber evidence="9">1.2.3.1</ecNumber>
    </recommendedName>
    <alternativeName>
        <fullName evidence="8">Glyoxal oxidase</fullName>
        <shortName evidence="6">VpGLOX</shortName>
    </alternativeName>
</protein>
<proteinExistence type="evidence at transcript level"/>
<accession>Q3HRQ2</accession>
<comment type="function">
    <text evidence="1 3 4">Catalyzes the oxidation of aldehydes to the corresponding carboxylate by coupling the reaction to the reduction of dioxygen to hydrogen peroxide. Substrates include glyoxal and other aldehydes (By similarity). Involved in disease resistance against the grapevine powdery mildew E.necator. Is sufficient to confer disease resistance to E.necator (PubMed:20512385, PubMed:23090239). Can produce hydrogen peroxide in response to E.necator infection, and this may directly play a role in the defense mechanism during plant-pathogen interactions (PubMed:23090239).</text>
</comment>
<comment type="catalytic activity">
    <reaction evidence="9">
        <text>an aldehyde + O2 + H2O = a carboxylate + H2O2 + H(+)</text>
        <dbReference type="Rhea" id="RHEA:16829"/>
        <dbReference type="ChEBI" id="CHEBI:15377"/>
        <dbReference type="ChEBI" id="CHEBI:15378"/>
        <dbReference type="ChEBI" id="CHEBI:15379"/>
        <dbReference type="ChEBI" id="CHEBI:16240"/>
        <dbReference type="ChEBI" id="CHEBI:17478"/>
        <dbReference type="ChEBI" id="CHEBI:29067"/>
        <dbReference type="EC" id="1.2.3.1"/>
    </reaction>
</comment>
<comment type="subcellular location">
    <subcellularLocation>
        <location evidence="4">Secreted</location>
        <location evidence="4">Cell wall</location>
    </subcellularLocation>
</comment>
<comment type="induction">
    <text evidence="5">Induced by infection by the grapevine powdery mildew E.necator.</text>
</comment>
<gene>
    <name evidence="7" type="primary">GLOX</name>
</gene>